<organism>
    <name type="scientific">Secale cereale</name>
    <name type="common">Rye</name>
    <dbReference type="NCBI Taxonomy" id="4550"/>
    <lineage>
        <taxon>Eukaryota</taxon>
        <taxon>Viridiplantae</taxon>
        <taxon>Streptophyta</taxon>
        <taxon>Embryophyta</taxon>
        <taxon>Tracheophyta</taxon>
        <taxon>Spermatophyta</taxon>
        <taxon>Magnoliopsida</taxon>
        <taxon>Liliopsida</taxon>
        <taxon>Poales</taxon>
        <taxon>Poaceae</taxon>
        <taxon>BOP clade</taxon>
        <taxon>Pooideae</taxon>
        <taxon>Triticodae</taxon>
        <taxon>Triticeae</taxon>
        <taxon>Hordeinae</taxon>
        <taxon>Secale</taxon>
    </lineage>
</organism>
<keyword id="KW-0150">Chloroplast</keyword>
<keyword id="KW-0472">Membrane</keyword>
<keyword id="KW-0934">Plastid</keyword>
<keyword id="KW-0793">Thylakoid</keyword>
<keyword id="KW-0812">Transmembrane</keyword>
<keyword id="KW-1133">Transmembrane helix</keyword>
<evidence type="ECO:0000255" key="1">
    <source>
        <dbReference type="HAMAP-Rule" id="MF_00293"/>
    </source>
</evidence>
<feature type="chain" id="PRO_0000207954" description="Protein PsbN">
    <location>
        <begin position="1"/>
        <end position="43"/>
    </location>
</feature>
<feature type="transmembrane region" description="Helical" evidence="1">
    <location>
        <begin position="5"/>
        <end position="27"/>
    </location>
</feature>
<sequence length="43" mass="4662">METATLVAISISGLLVSFTGYALYTAFGQPSQQLRDPFEEHGD</sequence>
<proteinExistence type="inferred from homology"/>
<gene>
    <name evidence="1" type="primary">psbN</name>
</gene>
<protein>
    <recommendedName>
        <fullName evidence="1">Protein PsbN</fullName>
    </recommendedName>
</protein>
<accession>P68856</accession>
<accession>P12171</accession>
<name>PSBN_SECCE</name>
<reference key="1">
    <citation type="journal article" date="1989" name="Bioorg. Khim.">
        <title>Photosystem II of rye. Nucleotide sequence of psbB and psbH genes, coding 47-kDa of chlorophyll(a)-binding and 10-kDa phosphorylated subunits.</title>
        <authorList>
            <person name="Bukharov A.A."/>
            <person name="Kolosov V.L."/>
            <person name="Zolotarev A.S."/>
            <person name="Abdulaev N.G."/>
        </authorList>
    </citation>
    <scope>NUCLEOTIDE SEQUENCE [GENOMIC DNA]</scope>
</reference>
<geneLocation type="chloroplast"/>
<dbReference type="PIR" id="JN0417">
    <property type="entry name" value="JN0417"/>
</dbReference>
<dbReference type="RefSeq" id="YP_008239197.1">
    <property type="nucleotide sequence ID" value="NC_021761.1"/>
</dbReference>
<dbReference type="SMR" id="P68856"/>
<dbReference type="GeneID" id="16792730"/>
<dbReference type="GO" id="GO:0009535">
    <property type="term" value="C:chloroplast thylakoid membrane"/>
    <property type="evidence" value="ECO:0007669"/>
    <property type="project" value="UniProtKB-SubCell"/>
</dbReference>
<dbReference type="GO" id="GO:0015979">
    <property type="term" value="P:photosynthesis"/>
    <property type="evidence" value="ECO:0007669"/>
    <property type="project" value="InterPro"/>
</dbReference>
<dbReference type="HAMAP" id="MF_00293">
    <property type="entry name" value="PSII_PsbN"/>
    <property type="match status" value="1"/>
</dbReference>
<dbReference type="InterPro" id="IPR003398">
    <property type="entry name" value="PSII_PsbN"/>
</dbReference>
<dbReference type="PANTHER" id="PTHR35326">
    <property type="entry name" value="PROTEIN PSBN"/>
    <property type="match status" value="1"/>
</dbReference>
<dbReference type="PANTHER" id="PTHR35326:SF3">
    <property type="entry name" value="PROTEIN PSBN"/>
    <property type="match status" value="1"/>
</dbReference>
<dbReference type="Pfam" id="PF02468">
    <property type="entry name" value="PsbN"/>
    <property type="match status" value="1"/>
</dbReference>
<comment type="function">
    <text evidence="1">May play a role in photosystem I and II biogenesis.</text>
</comment>
<comment type="subcellular location">
    <subcellularLocation>
        <location evidence="1">Plastid</location>
        <location evidence="1">Chloroplast thylakoid membrane</location>
        <topology evidence="1">Single-pass membrane protein</topology>
    </subcellularLocation>
</comment>
<comment type="similarity">
    <text evidence="1">Belongs to the PsbN family.</text>
</comment>
<comment type="caution">
    <text evidence="1">Originally thought to be a component of PSII; based on experiments in Synechocystis, N.tabacum and barley, and its absence from PSII in T.elongatus and T.vulcanus, this is probably not true.</text>
</comment>